<reference key="1">
    <citation type="journal article" date="2005" name="Nature">
        <title>Sequencing of Aspergillus nidulans and comparative analysis with A. fumigatus and A. oryzae.</title>
        <authorList>
            <person name="Galagan J.E."/>
            <person name="Calvo S.E."/>
            <person name="Cuomo C."/>
            <person name="Ma L.-J."/>
            <person name="Wortman J.R."/>
            <person name="Batzoglou S."/>
            <person name="Lee S.-I."/>
            <person name="Bastuerkmen M."/>
            <person name="Spevak C.C."/>
            <person name="Clutterbuck J."/>
            <person name="Kapitonov V."/>
            <person name="Jurka J."/>
            <person name="Scazzocchio C."/>
            <person name="Farman M.L."/>
            <person name="Butler J."/>
            <person name="Purcell S."/>
            <person name="Harris S."/>
            <person name="Braus G.H."/>
            <person name="Draht O."/>
            <person name="Busch S."/>
            <person name="D'Enfert C."/>
            <person name="Bouchier C."/>
            <person name="Goldman G.H."/>
            <person name="Bell-Pedersen D."/>
            <person name="Griffiths-Jones S."/>
            <person name="Doonan J.H."/>
            <person name="Yu J."/>
            <person name="Vienken K."/>
            <person name="Pain A."/>
            <person name="Freitag M."/>
            <person name="Selker E.U."/>
            <person name="Archer D.B."/>
            <person name="Penalva M.A."/>
            <person name="Oakley B.R."/>
            <person name="Momany M."/>
            <person name="Tanaka T."/>
            <person name="Kumagai T."/>
            <person name="Asai K."/>
            <person name="Machida M."/>
            <person name="Nierman W.C."/>
            <person name="Denning D.W."/>
            <person name="Caddick M.X."/>
            <person name="Hynes M."/>
            <person name="Paoletti M."/>
            <person name="Fischer R."/>
            <person name="Miller B.L."/>
            <person name="Dyer P.S."/>
            <person name="Sachs M.S."/>
            <person name="Osmani S.A."/>
            <person name="Birren B.W."/>
        </authorList>
    </citation>
    <scope>NUCLEOTIDE SEQUENCE [LARGE SCALE GENOMIC DNA]</scope>
    <source>
        <strain>FGSC A4 / ATCC 38163 / CBS 112.46 / NRRL 194 / M139</strain>
    </source>
</reference>
<reference key="2">
    <citation type="journal article" date="2009" name="Fungal Genet. Biol.">
        <title>The 2008 update of the Aspergillus nidulans genome annotation: a community effort.</title>
        <authorList>
            <person name="Wortman J.R."/>
            <person name="Gilsenan J.M."/>
            <person name="Joardar V."/>
            <person name="Deegan J."/>
            <person name="Clutterbuck J."/>
            <person name="Andersen M.R."/>
            <person name="Archer D."/>
            <person name="Bencina M."/>
            <person name="Braus G."/>
            <person name="Coutinho P."/>
            <person name="von Dohren H."/>
            <person name="Doonan J."/>
            <person name="Driessen A.J."/>
            <person name="Durek P."/>
            <person name="Espeso E."/>
            <person name="Fekete E."/>
            <person name="Flipphi M."/>
            <person name="Estrada C.G."/>
            <person name="Geysens S."/>
            <person name="Goldman G."/>
            <person name="de Groot P.W."/>
            <person name="Hansen K."/>
            <person name="Harris S.D."/>
            <person name="Heinekamp T."/>
            <person name="Helmstaedt K."/>
            <person name="Henrissat B."/>
            <person name="Hofmann G."/>
            <person name="Homan T."/>
            <person name="Horio T."/>
            <person name="Horiuchi H."/>
            <person name="James S."/>
            <person name="Jones M."/>
            <person name="Karaffa L."/>
            <person name="Karanyi Z."/>
            <person name="Kato M."/>
            <person name="Keller N."/>
            <person name="Kelly D.E."/>
            <person name="Kiel J.A."/>
            <person name="Kim J.M."/>
            <person name="van der Klei I.J."/>
            <person name="Klis F.M."/>
            <person name="Kovalchuk A."/>
            <person name="Krasevec N."/>
            <person name="Kubicek C.P."/>
            <person name="Liu B."/>
            <person name="Maccabe A."/>
            <person name="Meyer V."/>
            <person name="Mirabito P."/>
            <person name="Miskei M."/>
            <person name="Mos M."/>
            <person name="Mullins J."/>
            <person name="Nelson D.R."/>
            <person name="Nielsen J."/>
            <person name="Oakley B.R."/>
            <person name="Osmani S.A."/>
            <person name="Pakula T."/>
            <person name="Paszewski A."/>
            <person name="Paulsen I."/>
            <person name="Pilsyk S."/>
            <person name="Pocsi I."/>
            <person name="Punt P.J."/>
            <person name="Ram A.F."/>
            <person name="Ren Q."/>
            <person name="Robellet X."/>
            <person name="Robson G."/>
            <person name="Seiboth B."/>
            <person name="van Solingen P."/>
            <person name="Specht T."/>
            <person name="Sun J."/>
            <person name="Taheri-Talesh N."/>
            <person name="Takeshita N."/>
            <person name="Ussery D."/>
            <person name="vanKuyk P.A."/>
            <person name="Visser H."/>
            <person name="van de Vondervoort P.J."/>
            <person name="de Vries R.P."/>
            <person name="Walton J."/>
            <person name="Xiang X."/>
            <person name="Xiong Y."/>
            <person name="Zeng A.P."/>
            <person name="Brandt B.W."/>
            <person name="Cornell M.J."/>
            <person name="van den Hondel C.A."/>
            <person name="Visser J."/>
            <person name="Oliver S.G."/>
            <person name="Turner G."/>
        </authorList>
    </citation>
    <scope>GENOME REANNOTATION</scope>
    <source>
        <strain>FGSC A4 / ATCC 38163 / CBS 112.46 / NRRL 194 / M139</strain>
    </source>
</reference>
<reference key="3">
    <citation type="journal article" date="2009" name="J. Am. Chem. Soc.">
        <title>A gene cluster containing two fungal polyketide synthases encodes the biosynthetic pathway for a polyketide, asperfuranone, in Aspergillus nidulans.</title>
        <authorList>
            <person name="Chiang Y.M."/>
            <person name="Szewczyk E."/>
            <person name="Davidson A.D."/>
            <person name="Keller N."/>
            <person name="Oakley B.R."/>
            <person name="Wang C.C."/>
        </authorList>
    </citation>
    <scope>FUNCTION</scope>
    <scope>DISRUPTION PHENOTYPE</scope>
</reference>
<reference key="4">
    <citation type="journal article" date="2010" name="Basic Clin. Pharmacol. Toxicol.">
        <title>Asperfuranone from Aspergillus nidulans inhibits proliferation of human non-small cell lung cancer A549 cells via blocking cell cycle progression and inducing apoptosis.</title>
        <authorList>
            <person name="Wang C.C."/>
            <person name="Chiang Y.M."/>
            <person name="Praseuth M.B."/>
            <person name="Kuo P.L."/>
            <person name="Liang H.L."/>
            <person name="Hsu Y.L."/>
        </authorList>
    </citation>
    <scope>BIOTECHNOLOGY</scope>
</reference>
<reference evidence="9" key="5">
    <citation type="submission" date="2021-02" db="PDB data bank">
        <title>Profiling function across the sequence space of flavin-dependent monooxygenase.</title>
        <authorList>
            <person name="Rodriguez Benitez A."/>
            <person name="Smith J.L."/>
            <person name="Narayan A.R.H."/>
        </authorList>
    </citation>
    <scope>X-RAY CRYSTALLOGRAPHY (2.09 ANGSTROMS)</scope>
</reference>
<gene>
    <name evidence="6" type="primary">afoD</name>
    <name type="ORF">AN1033</name>
</gene>
<name>AFOD_EMENI</name>
<protein>
    <recommendedName>
        <fullName evidence="7">FAD-dependent monooxygenase afoD</fullName>
        <ecNumber evidence="8">1.-.-.-</ecNumber>
    </recommendedName>
    <alternativeName>
        <fullName evidence="6">Asperfuranone biosynthesis protein D</fullName>
    </alternativeName>
</protein>
<organism>
    <name type="scientific">Emericella nidulans (strain FGSC A4 / ATCC 38163 / CBS 112.46 / NRRL 194 / M139)</name>
    <name type="common">Aspergillus nidulans</name>
    <dbReference type="NCBI Taxonomy" id="227321"/>
    <lineage>
        <taxon>Eukaryota</taxon>
        <taxon>Fungi</taxon>
        <taxon>Dikarya</taxon>
        <taxon>Ascomycota</taxon>
        <taxon>Pezizomycotina</taxon>
        <taxon>Eurotiomycetes</taxon>
        <taxon>Eurotiomycetidae</taxon>
        <taxon>Eurotiales</taxon>
        <taxon>Aspergillaceae</taxon>
        <taxon>Aspergillus</taxon>
        <taxon>Aspergillus subgen. Nidulantes</taxon>
    </lineage>
</organism>
<accession>Q5BEJ7</accession>
<accession>C8VTY0</accession>
<dbReference type="EC" id="1.-.-.-" evidence="8"/>
<dbReference type="EMBL" id="BN001308">
    <property type="protein sequence ID" value="CBF88297.1"/>
    <property type="molecule type" value="Genomic_DNA"/>
</dbReference>
<dbReference type="EMBL" id="AACD01000015">
    <property type="protein sequence ID" value="EAA65601.1"/>
    <property type="molecule type" value="Genomic_DNA"/>
</dbReference>
<dbReference type="RefSeq" id="XP_658637.1">
    <property type="nucleotide sequence ID" value="XM_653545.1"/>
</dbReference>
<dbReference type="PDB" id="7LO1">
    <property type="method" value="X-ray"/>
    <property type="resolution" value="2.09 A"/>
    <property type="chains" value="A/B=1-440"/>
</dbReference>
<dbReference type="PDBsum" id="7LO1"/>
<dbReference type="SMR" id="Q5BEJ7"/>
<dbReference type="STRING" id="227321.Q5BEJ7"/>
<dbReference type="GlyCosmos" id="Q5BEJ7">
    <property type="glycosylation" value="1 site, No reported glycans"/>
</dbReference>
<dbReference type="EnsemblFungi" id="CBF88297">
    <property type="protein sequence ID" value="CBF88297"/>
    <property type="gene ID" value="ANIA_01033"/>
</dbReference>
<dbReference type="KEGG" id="ani:ANIA_01033"/>
<dbReference type="VEuPathDB" id="FungiDB:AN1033"/>
<dbReference type="eggNOG" id="KOG2614">
    <property type="taxonomic scope" value="Eukaryota"/>
</dbReference>
<dbReference type="HOGENOM" id="CLU_009665_6_3_1"/>
<dbReference type="InParanoid" id="Q5BEJ7"/>
<dbReference type="OMA" id="WSCLRSH"/>
<dbReference type="OrthoDB" id="417877at2759"/>
<dbReference type="Proteomes" id="UP000000560">
    <property type="component" value="Chromosome VIII"/>
</dbReference>
<dbReference type="GO" id="GO:0016020">
    <property type="term" value="C:membrane"/>
    <property type="evidence" value="ECO:0007669"/>
    <property type="project" value="UniProtKB-SubCell"/>
</dbReference>
<dbReference type="GO" id="GO:0071949">
    <property type="term" value="F:FAD binding"/>
    <property type="evidence" value="ECO:0007669"/>
    <property type="project" value="InterPro"/>
</dbReference>
<dbReference type="GO" id="GO:0004497">
    <property type="term" value="F:monooxygenase activity"/>
    <property type="evidence" value="ECO:0007669"/>
    <property type="project" value="UniProtKB-KW"/>
</dbReference>
<dbReference type="GO" id="GO:1900554">
    <property type="term" value="P:asperfuranone biosynthetic process"/>
    <property type="evidence" value="ECO:0000315"/>
    <property type="project" value="AspGD"/>
</dbReference>
<dbReference type="GO" id="GO:0044550">
    <property type="term" value="P:secondary metabolite biosynthetic process"/>
    <property type="evidence" value="ECO:0000318"/>
    <property type="project" value="GO_Central"/>
</dbReference>
<dbReference type="FunFam" id="3.50.50.60:FF:000153">
    <property type="entry name" value="Salicylate hydroxylase, putative"/>
    <property type="match status" value="1"/>
</dbReference>
<dbReference type="Gene3D" id="3.50.50.60">
    <property type="entry name" value="FAD/NAD(P)-binding domain"/>
    <property type="match status" value="1"/>
</dbReference>
<dbReference type="InterPro" id="IPR002938">
    <property type="entry name" value="FAD-bd"/>
</dbReference>
<dbReference type="InterPro" id="IPR006076">
    <property type="entry name" value="FAD-dep_OxRdtase"/>
</dbReference>
<dbReference type="InterPro" id="IPR036188">
    <property type="entry name" value="FAD/NAD-bd_sf"/>
</dbReference>
<dbReference type="InterPro" id="IPR051104">
    <property type="entry name" value="FAD_monoxygenase"/>
</dbReference>
<dbReference type="PANTHER" id="PTHR46720:SF3">
    <property type="entry name" value="FAD-BINDING DOMAIN-CONTAINING PROTEIN-RELATED"/>
    <property type="match status" value="1"/>
</dbReference>
<dbReference type="PANTHER" id="PTHR46720">
    <property type="entry name" value="HYDROXYLASE, PUTATIVE (AFU_ORTHOLOGUE AFUA_3G01460)-RELATED"/>
    <property type="match status" value="1"/>
</dbReference>
<dbReference type="Pfam" id="PF01266">
    <property type="entry name" value="DAO"/>
    <property type="match status" value="1"/>
</dbReference>
<dbReference type="Pfam" id="PF01494">
    <property type="entry name" value="FAD_binding_3"/>
    <property type="match status" value="1"/>
</dbReference>
<dbReference type="PRINTS" id="PR00420">
    <property type="entry name" value="RNGMNOXGNASE"/>
</dbReference>
<dbReference type="SUPFAM" id="SSF54373">
    <property type="entry name" value="FAD-linked reductases, C-terminal domain"/>
    <property type="match status" value="1"/>
</dbReference>
<dbReference type="SUPFAM" id="SSF51905">
    <property type="entry name" value="FAD/NAD(P)-binding domain"/>
    <property type="match status" value="1"/>
</dbReference>
<feature type="chain" id="PRO_0000436372" description="FAD-dependent monooxygenase afoD">
    <location>
        <begin position="1"/>
        <end position="440"/>
    </location>
</feature>
<feature type="transmembrane region" description="Helical" evidence="1">
    <location>
        <begin position="10"/>
        <end position="30"/>
    </location>
</feature>
<feature type="binding site" evidence="5 9">
    <location>
        <position position="41"/>
    </location>
    <ligand>
        <name>FAD</name>
        <dbReference type="ChEBI" id="CHEBI:57692"/>
    </ligand>
</feature>
<feature type="binding site" evidence="5 9">
    <location>
        <position position="145"/>
    </location>
    <ligand>
        <name>FAD</name>
        <dbReference type="ChEBI" id="CHEBI:57692"/>
    </ligand>
</feature>
<feature type="binding site" evidence="5 9">
    <location>
        <position position="320"/>
    </location>
    <ligand>
        <name>FAD</name>
        <dbReference type="ChEBI" id="CHEBI:57692"/>
    </ligand>
</feature>
<feature type="glycosylation site" description="N-linked (GlcNAc...) asparagine" evidence="2">
    <location>
        <position position="352"/>
    </location>
</feature>
<feature type="strand" evidence="10">
    <location>
        <begin position="12"/>
        <end position="16"/>
    </location>
</feature>
<feature type="helix" evidence="10">
    <location>
        <begin position="20"/>
        <end position="31"/>
    </location>
</feature>
<feature type="strand" evidence="10">
    <location>
        <begin position="35"/>
        <end position="40"/>
    </location>
</feature>
<feature type="strand" evidence="10">
    <location>
        <begin position="42"/>
        <end position="45"/>
    </location>
</feature>
<feature type="strand" evidence="10">
    <location>
        <begin position="52"/>
        <end position="55"/>
    </location>
</feature>
<feature type="helix" evidence="10">
    <location>
        <begin position="57"/>
        <end position="66"/>
    </location>
</feature>
<feature type="helix" evidence="10">
    <location>
        <begin position="68"/>
        <end position="77"/>
    </location>
</feature>
<feature type="strand" evidence="10">
    <location>
        <begin position="84"/>
        <end position="93"/>
    </location>
</feature>
<feature type="helix" evidence="10">
    <location>
        <begin position="97"/>
        <end position="101"/>
    </location>
</feature>
<feature type="helix" evidence="10">
    <location>
        <begin position="103"/>
        <end position="106"/>
    </location>
</feature>
<feature type="strand" evidence="10">
    <location>
        <begin position="107"/>
        <end position="112"/>
    </location>
</feature>
<feature type="turn" evidence="10">
    <location>
        <begin position="114"/>
        <end position="116"/>
    </location>
</feature>
<feature type="strand" evidence="10">
    <location>
        <begin position="119"/>
        <end position="122"/>
    </location>
</feature>
<feature type="helix" evidence="10">
    <location>
        <begin position="123"/>
        <end position="131"/>
    </location>
</feature>
<feature type="strand" evidence="10">
    <location>
        <begin position="138"/>
        <end position="140"/>
    </location>
</feature>
<feature type="strand" evidence="10">
    <location>
        <begin position="145"/>
        <end position="149"/>
    </location>
</feature>
<feature type="strand" evidence="10">
    <location>
        <begin position="152"/>
        <end position="154"/>
    </location>
</feature>
<feature type="strand" evidence="10">
    <location>
        <begin position="156"/>
        <end position="160"/>
    </location>
</feature>
<feature type="strand" evidence="10">
    <location>
        <begin position="165"/>
        <end position="173"/>
    </location>
</feature>
<feature type="helix" evidence="10">
    <location>
        <begin position="180"/>
        <end position="186"/>
    </location>
</feature>
<feature type="helix" evidence="10">
    <location>
        <begin position="191"/>
        <end position="193"/>
    </location>
</feature>
<feature type="strand" evidence="10">
    <location>
        <begin position="196"/>
        <end position="208"/>
    </location>
</feature>
<feature type="helix" evidence="10">
    <location>
        <begin position="209"/>
        <end position="216"/>
    </location>
</feature>
<feature type="helix" evidence="10">
    <location>
        <begin position="218"/>
        <end position="221"/>
    </location>
</feature>
<feature type="strand" evidence="10">
    <location>
        <begin position="225"/>
        <end position="229"/>
    </location>
</feature>
<feature type="strand" evidence="10">
    <location>
        <begin position="232"/>
        <end position="239"/>
    </location>
</feature>
<feature type="turn" evidence="10">
    <location>
        <begin position="240"/>
        <end position="243"/>
    </location>
</feature>
<feature type="strand" evidence="10">
    <location>
        <begin position="244"/>
        <end position="252"/>
    </location>
</feature>
<feature type="strand" evidence="10">
    <location>
        <begin position="259"/>
        <end position="261"/>
    </location>
</feature>
<feature type="strand" evidence="10">
    <location>
        <begin position="264"/>
        <end position="268"/>
    </location>
</feature>
<feature type="helix" evidence="10">
    <location>
        <begin position="269"/>
        <end position="275"/>
    </location>
</feature>
<feature type="turn" evidence="10">
    <location>
        <begin position="276"/>
        <end position="278"/>
    </location>
</feature>
<feature type="helix" evidence="10">
    <location>
        <begin position="281"/>
        <end position="288"/>
    </location>
</feature>
<feature type="strand" evidence="10">
    <location>
        <begin position="292"/>
        <end position="305"/>
    </location>
</feature>
<feature type="strand" evidence="10">
    <location>
        <begin position="310"/>
        <end position="312"/>
    </location>
</feature>
<feature type="strand" evidence="10">
    <location>
        <begin position="315"/>
        <end position="317"/>
    </location>
</feature>
<feature type="helix" evidence="10">
    <location>
        <begin position="320"/>
        <end position="323"/>
    </location>
</feature>
<feature type="helix" evidence="10">
    <location>
        <begin position="333"/>
        <end position="351"/>
    </location>
</feature>
<feature type="helix" evidence="10">
    <location>
        <begin position="360"/>
        <end position="392"/>
    </location>
</feature>
<feature type="turn" evidence="10">
    <location>
        <begin position="397"/>
        <end position="401"/>
    </location>
</feature>
<feature type="helix" evidence="10">
    <location>
        <begin position="403"/>
        <end position="418"/>
    </location>
</feature>
<feature type="helix" evidence="10">
    <location>
        <begin position="422"/>
        <end position="436"/>
    </location>
</feature>
<keyword id="KW-0002">3D-structure</keyword>
<keyword id="KW-0274">FAD</keyword>
<keyword id="KW-0285">Flavoprotein</keyword>
<keyword id="KW-0325">Glycoprotein</keyword>
<keyword id="KW-0472">Membrane</keyword>
<keyword id="KW-0503">Monooxygenase</keyword>
<keyword id="KW-0560">Oxidoreductase</keyword>
<keyword id="KW-1185">Reference proteome</keyword>
<keyword id="KW-0812">Transmembrane</keyword>
<keyword id="KW-1133">Transmembrane helix</keyword>
<sequence length="440" mass="49022">MADHEQEQEPLSIAIIGGGIIGLMTALGLLHRNIGKVTIYERASAWPDIGAAFAFTGIARECMQRLDPAILSALSKVAQRNPHDKVRYWDGFHPKSKEEAQDPEKSVLFEIEEKNMAYWACLRGVFHAEMARLLPERVVRFGKRLVAYEDGGDQKVVLRFEDGEVEEADIVIACDGVHSTARRVLLGAEHPAANARYSRKAVYRALVPMPAAIDALGTEKAHVQIAHCGPDAHIVSFPVNNAQIYNVFLFTHDSNEWTHGHTMTVPSSKEEILSAVENWGPHIKELASLFPEQLSKYAIFDQADHPLPYYAAGRVALAGDAAHASSPFHGAGACMGVEDALVLAELLEKVQNGSAFKEKKSNIELALKTYSDVRIERSQWLVKSSREMGDLYEWRYEDIGGDGVKCKAEWERRSRVIWDFDVQGMVDQAREAYERAVVKV</sequence>
<comment type="function">
    <text evidence="3">FAD-dependent monooxygenase; part of the gene cluster that mediates the biosynthesis of asperfuranone, a probable antitumor agent (PubMed:19199437). The polyketide synthase afoG is responsible for producing the 3,5-dimethyloctadienone moiety from acetyl-CoA, three malonyl-CoA, and two S-adenosyl methionines (SAM) (PubMed:19199437). The 3,5-dimethyloctadienone moiety is then loaded onto the SAT domain of afoE and extended with four malonyl-CoA and one SAM, which leads to the formation of 2,4-dihydroxy-6-(5,7-dimethyl-2-oxo-trans-3-trans-5-nonadienyl)-3-methylbenzaldehyde (compound 2) after reductive release and aldol condensation (PubMed:19199437). AfoD is the next enzyme in the biosynthesis sequence and hydroxylates the side chain at the benzylic position of compound 2 (PubMed:19199437). After benzylic hydroxylation, a furan ring is formed after five-member ring hemiacetal formation and water elimination (PubMed:19199437). AfoF and afoC are proposed to oxidize the R-diketone proton and to reduce the unconjugated carbonyl group, respectively, to generate asperfuranone (PubMed:19199437). Since no intermediates could be isolated from afoF and afoC deletants, the sequence of these two enzymes is not fully understood (PubMed:19199437). Moreover, since afoC deletant still produces a small amount of asperfuranone, other endogenous oxidoreductases might catalyze the same reaction with much less efficiency (PubMed:19199437).</text>
</comment>
<comment type="cofactor">
    <cofactor evidence="7">
        <name>FAD</name>
        <dbReference type="ChEBI" id="CHEBI:57692"/>
    </cofactor>
</comment>
<comment type="subcellular location">
    <subcellularLocation>
        <location evidence="1">Membrane</location>
        <topology evidence="1">Single-pass membrane protein</topology>
    </subcellularLocation>
</comment>
<comment type="induction">
    <text evidence="3">Expression is regulated by the asperfuranone cluster transcription factor afoA (PubMed:19199437).</text>
</comment>
<comment type="disruption phenotype">
    <text evidence="3">Completely abolishes the production of asperfuranone (PubMed:19199437). Produces a large amount of intermediates including 2,4-dihydroxy-6-(5,7-dimethyl-2-oxo-trans-3-trans-5-nonadienyl)-3-methylbenzaldehyde (PubMed:19199437).</text>
</comment>
<comment type="biotechnology">
    <text evidence="4">Asperfuranone provides anti-proliferative activity in human non-small cell lung cancer cells (PubMed:20148857).</text>
</comment>
<comment type="similarity">
    <text evidence="7">Belongs to the paxM FAD-dependent monooxygenase family.</text>
</comment>
<evidence type="ECO:0000255" key="1"/>
<evidence type="ECO:0000255" key="2">
    <source>
        <dbReference type="PROSITE-ProRule" id="PRU00498"/>
    </source>
</evidence>
<evidence type="ECO:0000269" key="3">
    <source>
    </source>
</evidence>
<evidence type="ECO:0000269" key="4">
    <source>
    </source>
</evidence>
<evidence type="ECO:0000269" key="5">
    <source ref="5"/>
</evidence>
<evidence type="ECO:0000303" key="6">
    <source>
    </source>
</evidence>
<evidence type="ECO:0000305" key="7"/>
<evidence type="ECO:0000305" key="8">
    <source>
    </source>
</evidence>
<evidence type="ECO:0007744" key="9">
    <source>
        <dbReference type="PDB" id="7LO1"/>
    </source>
</evidence>
<evidence type="ECO:0007829" key="10">
    <source>
        <dbReference type="PDB" id="7LO1"/>
    </source>
</evidence>
<proteinExistence type="evidence at protein level"/>